<name>DDIAS_HUMAN</name>
<gene>
    <name type="primary">DDIAS</name>
    <name type="synonym">C11orf82</name>
    <name type="synonym">NOXIN</name>
</gene>
<feature type="chain" id="PRO_0000311838" description="DNA damage-induced apoptosis suppressor protein">
    <location>
        <begin position="1"/>
        <end position="998"/>
    </location>
</feature>
<feature type="region of interest" description="Disordered" evidence="2">
    <location>
        <begin position="815"/>
        <end position="834"/>
    </location>
</feature>
<feature type="compositionally biased region" description="Polar residues" evidence="2">
    <location>
        <begin position="817"/>
        <end position="834"/>
    </location>
</feature>
<feature type="splice variant" id="VSP_029606" description="In isoform 2." evidence="6">
    <original>GIAGFTVI</original>
    <variation>ATQDAKTK</variation>
    <location>
        <begin position="171"/>
        <end position="178"/>
    </location>
</feature>
<feature type="splice variant" id="VSP_029607" description="In isoform 2." evidence="6">
    <location>
        <begin position="179"/>
        <end position="998"/>
    </location>
</feature>
<feature type="sequence variant" id="VAR_037326" description="In dbSNP:rs17853911." evidence="4">
    <original>I</original>
    <variation>T</variation>
    <location>
        <position position="217"/>
    </location>
</feature>
<feature type="sequence variant" id="VAR_037327" description="In dbSNP:rs7947780." evidence="3 4">
    <original>R</original>
    <variation>S</variation>
    <location>
        <position position="460"/>
    </location>
</feature>
<feature type="sequence variant" id="VAR_037328" description="In dbSNP:rs35711622.">
    <original>D</original>
    <variation>N</variation>
    <location>
        <position position="757"/>
    </location>
</feature>
<feature type="sequence variant" id="VAR_037329" description="In dbSNP:rs11826199.">
    <original>P</original>
    <variation>R</variation>
    <location>
        <position position="795"/>
    </location>
</feature>
<feature type="sequence variant" id="VAR_037330" description="In dbSNP:rs7130899." evidence="4">
    <original>V</original>
    <variation>I</variation>
    <location>
        <position position="842"/>
    </location>
</feature>
<feature type="sequence conflict" description="In Ref. 1; BAB71685." evidence="7" ref="1">
    <original>H</original>
    <variation>R</variation>
    <location>
        <position position="153"/>
    </location>
</feature>
<organism>
    <name type="scientific">Homo sapiens</name>
    <name type="common">Human</name>
    <dbReference type="NCBI Taxonomy" id="9606"/>
    <lineage>
        <taxon>Eukaryota</taxon>
        <taxon>Metazoa</taxon>
        <taxon>Chordata</taxon>
        <taxon>Craniata</taxon>
        <taxon>Vertebrata</taxon>
        <taxon>Euteleostomi</taxon>
        <taxon>Mammalia</taxon>
        <taxon>Eutheria</taxon>
        <taxon>Euarchontoglires</taxon>
        <taxon>Primates</taxon>
        <taxon>Haplorrhini</taxon>
        <taxon>Catarrhini</taxon>
        <taxon>Hominidae</taxon>
        <taxon>Homo</taxon>
    </lineage>
</organism>
<reference key="1">
    <citation type="journal article" date="2004" name="Nat. Genet.">
        <title>Complete sequencing and characterization of 21,243 full-length human cDNAs.</title>
        <authorList>
            <person name="Ota T."/>
            <person name="Suzuki Y."/>
            <person name="Nishikawa T."/>
            <person name="Otsuki T."/>
            <person name="Sugiyama T."/>
            <person name="Irie R."/>
            <person name="Wakamatsu A."/>
            <person name="Hayashi K."/>
            <person name="Sato H."/>
            <person name="Nagai K."/>
            <person name="Kimura K."/>
            <person name="Makita H."/>
            <person name="Sekine M."/>
            <person name="Obayashi M."/>
            <person name="Nishi T."/>
            <person name="Shibahara T."/>
            <person name="Tanaka T."/>
            <person name="Ishii S."/>
            <person name="Yamamoto J."/>
            <person name="Saito K."/>
            <person name="Kawai Y."/>
            <person name="Isono Y."/>
            <person name="Nakamura Y."/>
            <person name="Nagahari K."/>
            <person name="Murakami K."/>
            <person name="Yasuda T."/>
            <person name="Iwayanagi T."/>
            <person name="Wagatsuma M."/>
            <person name="Shiratori A."/>
            <person name="Sudo H."/>
            <person name="Hosoiri T."/>
            <person name="Kaku Y."/>
            <person name="Kodaira H."/>
            <person name="Kondo H."/>
            <person name="Sugawara M."/>
            <person name="Takahashi M."/>
            <person name="Kanda K."/>
            <person name="Yokoi T."/>
            <person name="Furuya T."/>
            <person name="Kikkawa E."/>
            <person name="Omura Y."/>
            <person name="Abe K."/>
            <person name="Kamihara K."/>
            <person name="Katsuta N."/>
            <person name="Sato K."/>
            <person name="Tanikawa M."/>
            <person name="Yamazaki M."/>
            <person name="Ninomiya K."/>
            <person name="Ishibashi T."/>
            <person name="Yamashita H."/>
            <person name="Murakawa K."/>
            <person name="Fujimori K."/>
            <person name="Tanai H."/>
            <person name="Kimata M."/>
            <person name="Watanabe M."/>
            <person name="Hiraoka S."/>
            <person name="Chiba Y."/>
            <person name="Ishida S."/>
            <person name="Ono Y."/>
            <person name="Takiguchi S."/>
            <person name="Watanabe S."/>
            <person name="Yosida M."/>
            <person name="Hotuta T."/>
            <person name="Kusano J."/>
            <person name="Kanehori K."/>
            <person name="Takahashi-Fujii A."/>
            <person name="Hara H."/>
            <person name="Tanase T.-O."/>
            <person name="Nomura Y."/>
            <person name="Togiya S."/>
            <person name="Komai F."/>
            <person name="Hara R."/>
            <person name="Takeuchi K."/>
            <person name="Arita M."/>
            <person name="Imose N."/>
            <person name="Musashino K."/>
            <person name="Yuuki H."/>
            <person name="Oshima A."/>
            <person name="Sasaki N."/>
            <person name="Aotsuka S."/>
            <person name="Yoshikawa Y."/>
            <person name="Matsunawa H."/>
            <person name="Ichihara T."/>
            <person name="Shiohata N."/>
            <person name="Sano S."/>
            <person name="Moriya S."/>
            <person name="Momiyama H."/>
            <person name="Satoh N."/>
            <person name="Takami S."/>
            <person name="Terashima Y."/>
            <person name="Suzuki O."/>
            <person name="Nakagawa S."/>
            <person name="Senoh A."/>
            <person name="Mizoguchi H."/>
            <person name="Goto Y."/>
            <person name="Shimizu F."/>
            <person name="Wakebe H."/>
            <person name="Hishigaki H."/>
            <person name="Watanabe T."/>
            <person name="Sugiyama A."/>
            <person name="Takemoto M."/>
            <person name="Kawakami B."/>
            <person name="Yamazaki M."/>
            <person name="Watanabe K."/>
            <person name="Kumagai A."/>
            <person name="Itakura S."/>
            <person name="Fukuzumi Y."/>
            <person name="Fujimori Y."/>
            <person name="Komiyama M."/>
            <person name="Tashiro H."/>
            <person name="Tanigami A."/>
            <person name="Fujiwara T."/>
            <person name="Ono T."/>
            <person name="Yamada K."/>
            <person name="Fujii Y."/>
            <person name="Ozaki K."/>
            <person name="Hirao M."/>
            <person name="Ohmori Y."/>
            <person name="Kawabata A."/>
            <person name="Hikiji T."/>
            <person name="Kobatake N."/>
            <person name="Inagaki H."/>
            <person name="Ikema Y."/>
            <person name="Okamoto S."/>
            <person name="Okitani R."/>
            <person name="Kawakami T."/>
            <person name="Noguchi S."/>
            <person name="Itoh T."/>
            <person name="Shigeta K."/>
            <person name="Senba T."/>
            <person name="Matsumura K."/>
            <person name="Nakajima Y."/>
            <person name="Mizuno T."/>
            <person name="Morinaga M."/>
            <person name="Sasaki M."/>
            <person name="Togashi T."/>
            <person name="Oyama M."/>
            <person name="Hata H."/>
            <person name="Watanabe M."/>
            <person name="Komatsu T."/>
            <person name="Mizushima-Sugano J."/>
            <person name="Satoh T."/>
            <person name="Shirai Y."/>
            <person name="Takahashi Y."/>
            <person name="Nakagawa K."/>
            <person name="Okumura K."/>
            <person name="Nagase T."/>
            <person name="Nomura N."/>
            <person name="Kikuchi H."/>
            <person name="Masuho Y."/>
            <person name="Yamashita R."/>
            <person name="Nakai K."/>
            <person name="Yada T."/>
            <person name="Nakamura Y."/>
            <person name="Ohara O."/>
            <person name="Isogai T."/>
            <person name="Sugano S."/>
        </authorList>
    </citation>
    <scope>NUCLEOTIDE SEQUENCE [LARGE SCALE MRNA] (ISOFORM 2)</scope>
    <scope>NUCLEOTIDE SEQUENCE [LARGE SCALE MRNA] OF 158-824 (ISOFORM 1)</scope>
    <scope>VARIANT SER-460</scope>
    <source>
        <tissue>Testis</tissue>
    </source>
</reference>
<reference key="2">
    <citation type="journal article" date="2006" name="Nature">
        <title>Human chromosome 11 DNA sequence and analysis including novel gene identification.</title>
        <authorList>
            <person name="Taylor T.D."/>
            <person name="Noguchi H."/>
            <person name="Totoki Y."/>
            <person name="Toyoda A."/>
            <person name="Kuroki Y."/>
            <person name="Dewar K."/>
            <person name="Lloyd C."/>
            <person name="Itoh T."/>
            <person name="Takeda T."/>
            <person name="Kim D.-W."/>
            <person name="She X."/>
            <person name="Barlow K.F."/>
            <person name="Bloom T."/>
            <person name="Bruford E."/>
            <person name="Chang J.L."/>
            <person name="Cuomo C.A."/>
            <person name="Eichler E."/>
            <person name="FitzGerald M.G."/>
            <person name="Jaffe D.B."/>
            <person name="LaButti K."/>
            <person name="Nicol R."/>
            <person name="Park H.-S."/>
            <person name="Seaman C."/>
            <person name="Sougnez C."/>
            <person name="Yang X."/>
            <person name="Zimmer A.R."/>
            <person name="Zody M.C."/>
            <person name="Birren B.W."/>
            <person name="Nusbaum C."/>
            <person name="Fujiyama A."/>
            <person name="Hattori M."/>
            <person name="Rogers J."/>
            <person name="Lander E.S."/>
            <person name="Sakaki Y."/>
        </authorList>
    </citation>
    <scope>NUCLEOTIDE SEQUENCE [LARGE SCALE GENOMIC DNA]</scope>
</reference>
<reference key="3">
    <citation type="journal article" date="2004" name="Genome Res.">
        <title>The status, quality, and expansion of the NIH full-length cDNA project: the Mammalian Gene Collection (MGC).</title>
        <authorList>
            <consortium name="The MGC Project Team"/>
        </authorList>
    </citation>
    <scope>NUCLEOTIDE SEQUENCE [LARGE SCALE MRNA] (ISOFORM 1)</scope>
    <scope>VARIANTS THR-217; SER-460 AND ILE-842</scope>
    <source>
        <tissue>Testis</tissue>
    </source>
</reference>
<reference key="4">
    <citation type="journal article" date="2014" name="Int. J. Cancer">
        <title>Human Noxin is an anti-apoptotic protein in response to DNA damage of A549 non-small cell lung carcinoma.</title>
        <authorList>
            <person name="Won K.J."/>
            <person name="Im J.Y."/>
            <person name="Yun C.O."/>
            <person name="Chung K.S."/>
            <person name="Kim Y.J."/>
            <person name="Lee J.S."/>
            <person name="Jung Y.J."/>
            <person name="Kim B.K."/>
            <person name="Song K.B."/>
            <person name="Kim Y.H."/>
            <person name="Chun H.K."/>
            <person name="Jung K.E."/>
            <person name="Kim M.H."/>
            <person name="Won M."/>
        </authorList>
    </citation>
    <scope>TISSUE SPECIFICITY</scope>
    <scope>INDUCTION</scope>
    <scope>FUNCTION</scope>
</reference>
<comment type="function">
    <text evidence="5">May be an anti-apoptotic protein involved in DNA repair or cell survival.</text>
</comment>
<comment type="subcellular location">
    <subcellularLocation>
        <location evidence="1">Cytoplasm</location>
    </subcellularLocation>
    <subcellularLocation>
        <location evidence="1">Nucleus</location>
    </subcellularLocation>
    <text evidence="1">Accumulates in the nucleus in response to stress.</text>
</comment>
<comment type="alternative products">
    <event type="alternative splicing"/>
    <isoform>
        <id>Q8IXT1-1</id>
        <name>1</name>
        <sequence type="displayed"/>
    </isoform>
    <isoform>
        <id>Q8IXT1-2</id>
        <name>2</name>
        <sequence type="described" ref="VSP_029606 VSP_029607"/>
    </isoform>
</comment>
<comment type="tissue specificity">
    <text evidence="5">Highly expressed in colorectal and lung cancer tissues.</text>
</comment>
<comment type="induction">
    <text evidence="5">Induced by UV irradiation. Expression starts to increase in early S phase and is steady high until late S phase in both cancer and normal cells.</text>
</comment>
<comment type="sequence caution" evidence="7">
    <conflict type="erroneous initiation">
        <sequence resource="EMBL-CDS" id="BAB14764"/>
    </conflict>
</comment>
<protein>
    <recommendedName>
        <fullName>DNA damage-induced apoptosis suppressor protein</fullName>
    </recommendedName>
    <alternativeName>
        <fullName>Nitric oxide-inducible gene protein</fullName>
    </alternativeName>
</protein>
<accession>Q8IXT1</accession>
<accession>Q96LK6</accession>
<accession>Q9H856</accession>
<keyword id="KW-0025">Alternative splicing</keyword>
<keyword id="KW-0053">Apoptosis</keyword>
<keyword id="KW-0131">Cell cycle</keyword>
<keyword id="KW-0963">Cytoplasm</keyword>
<keyword id="KW-0338">Growth arrest</keyword>
<keyword id="KW-0539">Nucleus</keyword>
<keyword id="KW-1267">Proteomics identification</keyword>
<keyword id="KW-1185">Reference proteome</keyword>
<sequence>MNRRRKFLLASVLALQNSSFIYPSCQKCFSRIILVSKRSNCPKCGSTGESGNANYRYKLSLKVAESNKLFVITVFGSCLDTFFGLTATGLHRYIQDPNKIPETLDNDTTQNLLTKAVETCFVGQSFIFGVTNFENQPGQGSDASNFLQQCSDHKRKAKALVACQIVLPDPGIAGFTVIDYFHQLLQTFNFRKLQCDSQAPNNHLLALDHSNSDLSSIYTSDSTSDFFKSCSKDTFSKFWQPSLEFTCIVSQLTDNDDFSASEQSKAFGTLQQNRKSISIAEATGSSSCHDPIQDSWSLVSYMDKKSTAEKLGKELGLQAKELSAVHSSHHEIGVNDSNLFSLEMREPLESSNTKSFHSAVEIKNRSQHELPCFQHHGIDTPTSLQKRSACCPPSLLRLEETASSSQDGDPQIWDDLPFSESLNKFLAVLESEIAVTQADVSSRKHHVDNDIDKFHADHSRLSVTPQRTTGALHTPPIALRSSQVIVKANCSKDDFLFNCKGNLSPSVEKESQPDNKVEAVSVNHNGRDMSEYFLPNPYLSALSSSSKDLETIVTLKKTIRISPHRESDHSSLNNKYLNGCGEISVSEMNEKLTTLCYRKYNDVSDLCKLENKQYCRWSKNQDDSFTICRKLTYPLETLCNSPNRSTNTLKEMPWGHINNNVTQSYSIGYEGSYDASADLFDDIAKEMDIATEITKKSQDILLKWGTSLAESHPSESDFSLRSLSEDFIQPSQKLSLQSLSDSRHSRTCSPTPHFQSDSEYNFENSQDFVPCSQSTPISGFHQTRIHGINRAFKKPVFYSDLDGNYEKIRIFPENDKQQASPSCPKNIKTPSQKIRSPIVSGVSQPDVFNHYPFAECHETDSDEWVPPTTQKIFPSDMLGFQGIGLGKCLAAYHFPDQQELPRKKLKHIRQGTNKGLIKKKLKNMLAAVVTKKKTHKYNCKSSGWISKCPDIQVLAAPQLHPILGPDSCSEVKCCLPFSEKGPPSVCETRSAWSPELFS</sequence>
<dbReference type="EMBL" id="AK023998">
    <property type="protein sequence ID" value="BAB14764.1"/>
    <property type="status" value="ALT_INIT"/>
    <property type="molecule type" value="mRNA"/>
</dbReference>
<dbReference type="EMBL" id="AK058145">
    <property type="protein sequence ID" value="BAB71685.1"/>
    <property type="molecule type" value="mRNA"/>
</dbReference>
<dbReference type="EMBL" id="AP001646">
    <property type="status" value="NOT_ANNOTATED_CDS"/>
    <property type="molecule type" value="Genomic_DNA"/>
</dbReference>
<dbReference type="EMBL" id="BC039268">
    <property type="protein sequence ID" value="AAH39268.1"/>
    <property type="molecule type" value="mRNA"/>
</dbReference>
<dbReference type="CCDS" id="CCDS8263.1">
    <molecule id="Q8IXT1-1"/>
</dbReference>
<dbReference type="RefSeq" id="NP_001350410.1">
    <molecule id="Q8IXT1-1"/>
    <property type="nucleotide sequence ID" value="NM_001363481.2"/>
</dbReference>
<dbReference type="RefSeq" id="NP_659455.3">
    <molecule id="Q8IXT1-1"/>
    <property type="nucleotide sequence ID" value="NM_145018.3"/>
</dbReference>
<dbReference type="RefSeq" id="XP_011543137.1">
    <property type="nucleotide sequence ID" value="XM_011544835.1"/>
</dbReference>
<dbReference type="RefSeq" id="XP_011543138.1">
    <molecule id="Q8IXT1-1"/>
    <property type="nucleotide sequence ID" value="XM_011544836.3"/>
</dbReference>
<dbReference type="RefSeq" id="XP_024304168.1">
    <molecule id="Q8IXT1-1"/>
    <property type="nucleotide sequence ID" value="XM_024448400.2"/>
</dbReference>
<dbReference type="RefSeq" id="XP_054223994.1">
    <molecule id="Q8IXT1-1"/>
    <property type="nucleotide sequence ID" value="XM_054368019.1"/>
</dbReference>
<dbReference type="RefSeq" id="XP_054223995.1">
    <molecule id="Q8IXT1-1"/>
    <property type="nucleotide sequence ID" value="XM_054368020.1"/>
</dbReference>
<dbReference type="RefSeq" id="XP_054223996.1">
    <molecule id="Q8IXT1-1"/>
    <property type="nucleotide sequence ID" value="XM_054368021.1"/>
</dbReference>
<dbReference type="RefSeq" id="XP_054223997.1">
    <molecule id="Q8IXT1-1"/>
    <property type="nucleotide sequence ID" value="XM_054368022.1"/>
</dbReference>
<dbReference type="RefSeq" id="XP_054223998.1">
    <molecule id="Q8IXT1-1"/>
    <property type="nucleotide sequence ID" value="XM_054368023.1"/>
</dbReference>
<dbReference type="BioGRID" id="128620">
    <property type="interactions" value="14"/>
</dbReference>
<dbReference type="FunCoup" id="Q8IXT1">
    <property type="interactions" value="436"/>
</dbReference>
<dbReference type="STRING" id="9606.ENSP00000435421"/>
<dbReference type="GlyGen" id="Q8IXT1">
    <property type="glycosylation" value="1 site, 1 O-linked glycan (1 site)"/>
</dbReference>
<dbReference type="iPTMnet" id="Q8IXT1"/>
<dbReference type="PhosphoSitePlus" id="Q8IXT1"/>
<dbReference type="BioMuta" id="DDIAS"/>
<dbReference type="DMDM" id="162416238"/>
<dbReference type="jPOST" id="Q8IXT1"/>
<dbReference type="MassIVE" id="Q8IXT1"/>
<dbReference type="PaxDb" id="9606-ENSP00000435421"/>
<dbReference type="PeptideAtlas" id="Q8IXT1"/>
<dbReference type="ProteomicsDB" id="71060">
    <molecule id="Q8IXT1-1"/>
</dbReference>
<dbReference type="Antibodypedia" id="31345">
    <property type="antibodies" value="54 antibodies from 17 providers"/>
</dbReference>
<dbReference type="DNASU" id="220042"/>
<dbReference type="Ensembl" id="ENST00000329143.4">
    <molecule id="Q8IXT1-1"/>
    <property type="protein sequence ID" value="ENSP00000329930.4"/>
    <property type="gene ID" value="ENSG00000165490.13"/>
</dbReference>
<dbReference type="Ensembl" id="ENST00000525361.5">
    <molecule id="Q8IXT1-2"/>
    <property type="protein sequence ID" value="ENSP00000435424.1"/>
    <property type="gene ID" value="ENSG00000165490.13"/>
</dbReference>
<dbReference type="Ensembl" id="ENST00000533655.6">
    <molecule id="Q8IXT1-1"/>
    <property type="protein sequence ID" value="ENSP00000435421.1"/>
    <property type="gene ID" value="ENSG00000165490.13"/>
</dbReference>
<dbReference type="GeneID" id="220042"/>
<dbReference type="KEGG" id="hsa:220042"/>
<dbReference type="MANE-Select" id="ENST00000533655.6">
    <property type="protein sequence ID" value="ENSP00000435421.1"/>
    <property type="RefSeq nucleotide sequence ID" value="NM_145018.4"/>
    <property type="RefSeq protein sequence ID" value="NP_659455.3"/>
</dbReference>
<dbReference type="UCSC" id="uc001ozt.4">
    <molecule id="Q8IXT1-1"/>
    <property type="organism name" value="human"/>
</dbReference>
<dbReference type="AGR" id="HGNC:26351"/>
<dbReference type="CTD" id="220042"/>
<dbReference type="DisGeNET" id="220042"/>
<dbReference type="GeneCards" id="DDIAS"/>
<dbReference type="HGNC" id="HGNC:26351">
    <property type="gene designation" value="DDIAS"/>
</dbReference>
<dbReference type="HPA" id="ENSG00000165490">
    <property type="expression patterns" value="Tissue enhanced (bone marrow, testis)"/>
</dbReference>
<dbReference type="MIM" id="618045">
    <property type="type" value="gene"/>
</dbReference>
<dbReference type="neXtProt" id="NX_Q8IXT1"/>
<dbReference type="OpenTargets" id="ENSG00000165490"/>
<dbReference type="PharmGKB" id="PA162377743"/>
<dbReference type="VEuPathDB" id="HostDB:ENSG00000165490"/>
<dbReference type="eggNOG" id="ENOG502R2XT">
    <property type="taxonomic scope" value="Eukaryota"/>
</dbReference>
<dbReference type="GeneTree" id="ENSGT00390000014932"/>
<dbReference type="HOGENOM" id="CLU_015113_0_0_1"/>
<dbReference type="InParanoid" id="Q8IXT1"/>
<dbReference type="OMA" id="WQPSLEL"/>
<dbReference type="OrthoDB" id="9948238at2759"/>
<dbReference type="PAN-GO" id="Q8IXT1">
    <property type="GO annotations" value="2 GO annotations based on evolutionary models"/>
</dbReference>
<dbReference type="PhylomeDB" id="Q8IXT1"/>
<dbReference type="TreeFam" id="TF332740"/>
<dbReference type="PathwayCommons" id="Q8IXT1"/>
<dbReference type="BioGRID-ORCS" id="220042">
    <property type="hits" value="8 hits in 1158 CRISPR screens"/>
</dbReference>
<dbReference type="ChiTaRS" id="DDIAS">
    <property type="organism name" value="human"/>
</dbReference>
<dbReference type="GenomeRNAi" id="220042"/>
<dbReference type="Pharos" id="Q8IXT1">
    <property type="development level" value="Tbio"/>
</dbReference>
<dbReference type="PRO" id="PR:Q8IXT1"/>
<dbReference type="Proteomes" id="UP000005640">
    <property type="component" value="Chromosome 11"/>
</dbReference>
<dbReference type="RNAct" id="Q8IXT1">
    <property type="molecule type" value="protein"/>
</dbReference>
<dbReference type="Bgee" id="ENSG00000165490">
    <property type="expression patterns" value="Expressed in oocyte and 116 other cell types or tissues"/>
</dbReference>
<dbReference type="ExpressionAtlas" id="Q8IXT1">
    <property type="expression patterns" value="baseline and differential"/>
</dbReference>
<dbReference type="GO" id="GO:0005737">
    <property type="term" value="C:cytoplasm"/>
    <property type="evidence" value="ECO:0000318"/>
    <property type="project" value="GO_Central"/>
</dbReference>
<dbReference type="GO" id="GO:0005634">
    <property type="term" value="C:nucleus"/>
    <property type="evidence" value="ECO:0000318"/>
    <property type="project" value="GO_Central"/>
</dbReference>
<dbReference type="GO" id="GO:0006915">
    <property type="term" value="P:apoptotic process"/>
    <property type="evidence" value="ECO:0007669"/>
    <property type="project" value="UniProtKB-KW"/>
</dbReference>
<dbReference type="GO" id="GO:1902230">
    <property type="term" value="P:negative regulation of intrinsic apoptotic signaling pathway in response to DNA damage"/>
    <property type="evidence" value="ECO:0000315"/>
    <property type="project" value="UniProtKB"/>
</dbReference>
<dbReference type="GO" id="GO:0051726">
    <property type="term" value="P:regulation of cell cycle"/>
    <property type="evidence" value="ECO:0007669"/>
    <property type="project" value="UniProtKB-KW"/>
</dbReference>
<dbReference type="GO" id="GO:0097752">
    <property type="term" value="P:regulation of DNA stability"/>
    <property type="evidence" value="ECO:0000315"/>
    <property type="project" value="UniProtKB"/>
</dbReference>
<dbReference type="FunFam" id="2.40.50.140:FF:000217">
    <property type="entry name" value="DNA damage induced apoptosis suppressor"/>
    <property type="match status" value="1"/>
</dbReference>
<dbReference type="Gene3D" id="2.40.50.140">
    <property type="entry name" value="Nucleic acid-binding proteins"/>
    <property type="match status" value="1"/>
</dbReference>
<dbReference type="InterPro" id="IPR043522">
    <property type="entry name" value="DDIAS"/>
</dbReference>
<dbReference type="InterPro" id="IPR012340">
    <property type="entry name" value="NA-bd_OB-fold"/>
</dbReference>
<dbReference type="InterPro" id="IPR013955">
    <property type="entry name" value="Rep_factor-A_C"/>
</dbReference>
<dbReference type="PANTHER" id="PTHR35537:SF1">
    <property type="entry name" value="DNA DAMAGE-INDUCED APOPTOSIS SUPPRESSOR PROTEIN"/>
    <property type="match status" value="1"/>
</dbReference>
<dbReference type="PANTHER" id="PTHR35537">
    <property type="entry name" value="DNA DAMAGE-INDUCIBLE APOPTOSIS SUPPRESSOR PROTEIN DDIAS"/>
    <property type="match status" value="1"/>
</dbReference>
<dbReference type="Pfam" id="PF08646">
    <property type="entry name" value="Rep_fac-A_C"/>
    <property type="match status" value="1"/>
</dbReference>
<dbReference type="SUPFAM" id="SSF50249">
    <property type="entry name" value="Nucleic acid-binding proteins"/>
    <property type="match status" value="1"/>
</dbReference>
<proteinExistence type="evidence at protein level"/>
<evidence type="ECO:0000250" key="1"/>
<evidence type="ECO:0000256" key="2">
    <source>
        <dbReference type="SAM" id="MobiDB-lite"/>
    </source>
</evidence>
<evidence type="ECO:0000269" key="3">
    <source>
    </source>
</evidence>
<evidence type="ECO:0000269" key="4">
    <source>
    </source>
</evidence>
<evidence type="ECO:0000269" key="5">
    <source>
    </source>
</evidence>
<evidence type="ECO:0000303" key="6">
    <source>
    </source>
</evidence>
<evidence type="ECO:0000305" key="7"/>